<protein>
    <recommendedName>
        <fullName evidence="1">Elongation factor 4</fullName>
        <shortName evidence="1">EF-4</shortName>
        <ecNumber evidence="1">3.6.5.n1</ecNumber>
    </recommendedName>
    <alternativeName>
        <fullName evidence="1">Ribosomal back-translocase LepA</fullName>
    </alternativeName>
</protein>
<organism>
    <name type="scientific">Geotalea daltonii (strain DSM 22248 / JCM 15807 / FRC-32)</name>
    <name type="common">Geobacter daltonii</name>
    <dbReference type="NCBI Taxonomy" id="316067"/>
    <lineage>
        <taxon>Bacteria</taxon>
        <taxon>Pseudomonadati</taxon>
        <taxon>Thermodesulfobacteriota</taxon>
        <taxon>Desulfuromonadia</taxon>
        <taxon>Geobacterales</taxon>
        <taxon>Geobacteraceae</taxon>
        <taxon>Geotalea</taxon>
    </lineage>
</organism>
<gene>
    <name evidence="1" type="primary">lepA</name>
    <name type="ordered locus">Geob_3286</name>
</gene>
<keyword id="KW-0997">Cell inner membrane</keyword>
<keyword id="KW-1003">Cell membrane</keyword>
<keyword id="KW-0342">GTP-binding</keyword>
<keyword id="KW-0378">Hydrolase</keyword>
<keyword id="KW-0472">Membrane</keyword>
<keyword id="KW-0547">Nucleotide-binding</keyword>
<keyword id="KW-0648">Protein biosynthesis</keyword>
<keyword id="KW-1185">Reference proteome</keyword>
<dbReference type="EC" id="3.6.5.n1" evidence="1"/>
<dbReference type="EMBL" id="CP001390">
    <property type="protein sequence ID" value="ACM21629.1"/>
    <property type="molecule type" value="Genomic_DNA"/>
</dbReference>
<dbReference type="RefSeq" id="WP_012648357.1">
    <property type="nucleotide sequence ID" value="NC_011979.1"/>
</dbReference>
<dbReference type="SMR" id="B9M4U5"/>
<dbReference type="STRING" id="316067.Geob_3286"/>
<dbReference type="KEGG" id="geo:Geob_3286"/>
<dbReference type="eggNOG" id="COG0481">
    <property type="taxonomic scope" value="Bacteria"/>
</dbReference>
<dbReference type="HOGENOM" id="CLU_009995_3_3_7"/>
<dbReference type="OrthoDB" id="9801591at2"/>
<dbReference type="Proteomes" id="UP000007721">
    <property type="component" value="Chromosome"/>
</dbReference>
<dbReference type="GO" id="GO:0005886">
    <property type="term" value="C:plasma membrane"/>
    <property type="evidence" value="ECO:0007669"/>
    <property type="project" value="UniProtKB-SubCell"/>
</dbReference>
<dbReference type="GO" id="GO:0005525">
    <property type="term" value="F:GTP binding"/>
    <property type="evidence" value="ECO:0007669"/>
    <property type="project" value="UniProtKB-UniRule"/>
</dbReference>
<dbReference type="GO" id="GO:0003924">
    <property type="term" value="F:GTPase activity"/>
    <property type="evidence" value="ECO:0007669"/>
    <property type="project" value="UniProtKB-UniRule"/>
</dbReference>
<dbReference type="GO" id="GO:0043022">
    <property type="term" value="F:ribosome binding"/>
    <property type="evidence" value="ECO:0007669"/>
    <property type="project" value="UniProtKB-UniRule"/>
</dbReference>
<dbReference type="GO" id="GO:0003746">
    <property type="term" value="F:translation elongation factor activity"/>
    <property type="evidence" value="ECO:0007669"/>
    <property type="project" value="UniProtKB-UniRule"/>
</dbReference>
<dbReference type="GO" id="GO:0045727">
    <property type="term" value="P:positive regulation of translation"/>
    <property type="evidence" value="ECO:0007669"/>
    <property type="project" value="UniProtKB-UniRule"/>
</dbReference>
<dbReference type="CDD" id="cd03699">
    <property type="entry name" value="EF4_II"/>
    <property type="match status" value="1"/>
</dbReference>
<dbReference type="CDD" id="cd16260">
    <property type="entry name" value="EF4_III"/>
    <property type="match status" value="1"/>
</dbReference>
<dbReference type="CDD" id="cd01890">
    <property type="entry name" value="LepA"/>
    <property type="match status" value="1"/>
</dbReference>
<dbReference type="CDD" id="cd03709">
    <property type="entry name" value="lepA_C"/>
    <property type="match status" value="1"/>
</dbReference>
<dbReference type="FunFam" id="3.40.50.300:FF:000078">
    <property type="entry name" value="Elongation factor 4"/>
    <property type="match status" value="1"/>
</dbReference>
<dbReference type="FunFam" id="2.40.30.10:FF:000015">
    <property type="entry name" value="Translation factor GUF1, mitochondrial"/>
    <property type="match status" value="1"/>
</dbReference>
<dbReference type="FunFam" id="3.30.70.240:FF:000007">
    <property type="entry name" value="Translation factor GUF1, mitochondrial"/>
    <property type="match status" value="1"/>
</dbReference>
<dbReference type="FunFam" id="3.30.70.2570:FF:000001">
    <property type="entry name" value="Translation factor GUF1, mitochondrial"/>
    <property type="match status" value="1"/>
</dbReference>
<dbReference type="FunFam" id="3.30.70.870:FF:000004">
    <property type="entry name" value="Translation factor GUF1, mitochondrial"/>
    <property type="match status" value="1"/>
</dbReference>
<dbReference type="Gene3D" id="3.30.70.240">
    <property type="match status" value="1"/>
</dbReference>
<dbReference type="Gene3D" id="3.30.70.2570">
    <property type="entry name" value="Elongation factor 4, C-terminal domain"/>
    <property type="match status" value="1"/>
</dbReference>
<dbReference type="Gene3D" id="3.30.70.870">
    <property type="entry name" value="Elongation Factor G (Translational Gtpase), domain 3"/>
    <property type="match status" value="1"/>
</dbReference>
<dbReference type="Gene3D" id="3.40.50.300">
    <property type="entry name" value="P-loop containing nucleotide triphosphate hydrolases"/>
    <property type="match status" value="1"/>
</dbReference>
<dbReference type="Gene3D" id="2.40.30.10">
    <property type="entry name" value="Translation factors"/>
    <property type="match status" value="1"/>
</dbReference>
<dbReference type="HAMAP" id="MF_00071">
    <property type="entry name" value="LepA"/>
    <property type="match status" value="1"/>
</dbReference>
<dbReference type="InterPro" id="IPR006297">
    <property type="entry name" value="EF-4"/>
</dbReference>
<dbReference type="InterPro" id="IPR035647">
    <property type="entry name" value="EFG_III/V"/>
</dbReference>
<dbReference type="InterPro" id="IPR000640">
    <property type="entry name" value="EFG_V-like"/>
</dbReference>
<dbReference type="InterPro" id="IPR004161">
    <property type="entry name" value="EFTu-like_2"/>
</dbReference>
<dbReference type="InterPro" id="IPR031157">
    <property type="entry name" value="G_TR_CS"/>
</dbReference>
<dbReference type="InterPro" id="IPR038363">
    <property type="entry name" value="LepA_C_sf"/>
</dbReference>
<dbReference type="InterPro" id="IPR013842">
    <property type="entry name" value="LepA_CTD"/>
</dbReference>
<dbReference type="InterPro" id="IPR035654">
    <property type="entry name" value="LepA_IV"/>
</dbReference>
<dbReference type="InterPro" id="IPR027417">
    <property type="entry name" value="P-loop_NTPase"/>
</dbReference>
<dbReference type="InterPro" id="IPR005225">
    <property type="entry name" value="Small_GTP-bd"/>
</dbReference>
<dbReference type="InterPro" id="IPR000795">
    <property type="entry name" value="T_Tr_GTP-bd_dom"/>
</dbReference>
<dbReference type="NCBIfam" id="TIGR01393">
    <property type="entry name" value="lepA"/>
    <property type="match status" value="1"/>
</dbReference>
<dbReference type="NCBIfam" id="TIGR00231">
    <property type="entry name" value="small_GTP"/>
    <property type="match status" value="1"/>
</dbReference>
<dbReference type="PANTHER" id="PTHR43512:SF4">
    <property type="entry name" value="TRANSLATION FACTOR GUF1 HOMOLOG, CHLOROPLASTIC"/>
    <property type="match status" value="1"/>
</dbReference>
<dbReference type="PANTHER" id="PTHR43512">
    <property type="entry name" value="TRANSLATION FACTOR GUF1-RELATED"/>
    <property type="match status" value="1"/>
</dbReference>
<dbReference type="Pfam" id="PF00679">
    <property type="entry name" value="EFG_C"/>
    <property type="match status" value="1"/>
</dbReference>
<dbReference type="Pfam" id="PF00009">
    <property type="entry name" value="GTP_EFTU"/>
    <property type="match status" value="1"/>
</dbReference>
<dbReference type="Pfam" id="PF03144">
    <property type="entry name" value="GTP_EFTU_D2"/>
    <property type="match status" value="1"/>
</dbReference>
<dbReference type="Pfam" id="PF06421">
    <property type="entry name" value="LepA_C"/>
    <property type="match status" value="1"/>
</dbReference>
<dbReference type="PRINTS" id="PR00315">
    <property type="entry name" value="ELONGATNFCT"/>
</dbReference>
<dbReference type="SUPFAM" id="SSF54980">
    <property type="entry name" value="EF-G C-terminal domain-like"/>
    <property type="match status" value="2"/>
</dbReference>
<dbReference type="SUPFAM" id="SSF52540">
    <property type="entry name" value="P-loop containing nucleoside triphosphate hydrolases"/>
    <property type="match status" value="1"/>
</dbReference>
<dbReference type="PROSITE" id="PS00301">
    <property type="entry name" value="G_TR_1"/>
    <property type="match status" value="1"/>
</dbReference>
<dbReference type="PROSITE" id="PS51722">
    <property type="entry name" value="G_TR_2"/>
    <property type="match status" value="1"/>
</dbReference>
<name>LEPA_GEODF</name>
<reference key="1">
    <citation type="submission" date="2009-01" db="EMBL/GenBank/DDBJ databases">
        <title>Complete sequence of Geobacter sp. FRC-32.</title>
        <authorList>
            <consortium name="US DOE Joint Genome Institute"/>
            <person name="Lucas S."/>
            <person name="Copeland A."/>
            <person name="Lapidus A."/>
            <person name="Glavina del Rio T."/>
            <person name="Dalin E."/>
            <person name="Tice H."/>
            <person name="Bruce D."/>
            <person name="Goodwin L."/>
            <person name="Pitluck S."/>
            <person name="Saunders E."/>
            <person name="Brettin T."/>
            <person name="Detter J.C."/>
            <person name="Han C."/>
            <person name="Larimer F."/>
            <person name="Land M."/>
            <person name="Hauser L."/>
            <person name="Kyrpides N."/>
            <person name="Ovchinnikova G."/>
            <person name="Kostka J."/>
            <person name="Richardson P."/>
        </authorList>
    </citation>
    <scope>NUCLEOTIDE SEQUENCE [LARGE SCALE GENOMIC DNA]</scope>
    <source>
        <strain>DSM 22248 / JCM 15807 / FRC-32</strain>
    </source>
</reference>
<evidence type="ECO:0000255" key="1">
    <source>
        <dbReference type="HAMAP-Rule" id="MF_00071"/>
    </source>
</evidence>
<sequence>MVLDNIRNFSIIAHIDHGKSTLADRLLEYTGALTEREMQNQVLDKMDLERERGITIKAQAVRLNYQANDGRQYILNLIDTPGHVDFTYEVSRSLSACEGALLVVDASQGVEAQTLANVYLALENDLDVFPVLNKIDLPAAEPERVKQEIEDIIGLDAHDAVLASAKEGIGTREILEEIVNKIPPPRGDAAKPLKALLFDSWYDQYQGVIVLVRILDGSVKKGDKIQLMSNRRNYEVLKVGVFSPAMCEVASLSAGEVGFIIGGIKDVQDAKVGDTITNLHNPCDAPLSGFKEVQPMVFSGLYPIDTSQYEQLRDALAKLKLNDSSFSYEPETSLALGFGFRCGFLGLLHMEIIQERLEREFNLDLITTAPTVVYKVHRLDGSIITIESANQLPPTQEIEFVEEPFILASIHVPNEFVGGILALCEEKRGVQREIKYLTPTRVMIVYELPLNEVVLDFYDRLKSITKGYASLDYEHLDYRRSNLERLNIMINGEVVDALSLIIHKEKAYYRGRDLVSKMKELIPRQMFEIAIQAAIGNKVIARETVKALRKDVLAKCYGGDITRKRKLLEKQKEGKKRMKNVGNVELPQEAFLAILKVEG</sequence>
<feature type="chain" id="PRO_1000190813" description="Elongation factor 4">
    <location>
        <begin position="1"/>
        <end position="599"/>
    </location>
</feature>
<feature type="domain" description="tr-type G">
    <location>
        <begin position="4"/>
        <end position="186"/>
    </location>
</feature>
<feature type="binding site" evidence="1">
    <location>
        <begin position="16"/>
        <end position="21"/>
    </location>
    <ligand>
        <name>GTP</name>
        <dbReference type="ChEBI" id="CHEBI:37565"/>
    </ligand>
</feature>
<feature type="binding site" evidence="1">
    <location>
        <begin position="133"/>
        <end position="136"/>
    </location>
    <ligand>
        <name>GTP</name>
        <dbReference type="ChEBI" id="CHEBI:37565"/>
    </ligand>
</feature>
<proteinExistence type="inferred from homology"/>
<accession>B9M4U5</accession>
<comment type="function">
    <text evidence="1">Required for accurate and efficient protein synthesis under certain stress conditions. May act as a fidelity factor of the translation reaction, by catalyzing a one-codon backward translocation of tRNAs on improperly translocated ribosomes. Back-translocation proceeds from a post-translocation (POST) complex to a pre-translocation (PRE) complex, thus giving elongation factor G a second chance to translocate the tRNAs correctly. Binds to ribosomes in a GTP-dependent manner.</text>
</comment>
<comment type="catalytic activity">
    <reaction evidence="1">
        <text>GTP + H2O = GDP + phosphate + H(+)</text>
        <dbReference type="Rhea" id="RHEA:19669"/>
        <dbReference type="ChEBI" id="CHEBI:15377"/>
        <dbReference type="ChEBI" id="CHEBI:15378"/>
        <dbReference type="ChEBI" id="CHEBI:37565"/>
        <dbReference type="ChEBI" id="CHEBI:43474"/>
        <dbReference type="ChEBI" id="CHEBI:58189"/>
        <dbReference type="EC" id="3.6.5.n1"/>
    </reaction>
</comment>
<comment type="subcellular location">
    <subcellularLocation>
        <location evidence="1">Cell inner membrane</location>
        <topology evidence="1">Peripheral membrane protein</topology>
        <orientation evidence="1">Cytoplasmic side</orientation>
    </subcellularLocation>
</comment>
<comment type="similarity">
    <text evidence="1">Belongs to the TRAFAC class translation factor GTPase superfamily. Classic translation factor GTPase family. LepA subfamily.</text>
</comment>